<comment type="function">
    <text evidence="1">Required for accurate and efficient protein synthesis under certain stress conditions. May act as a fidelity factor of the translation reaction, by catalyzing a one-codon backward translocation of tRNAs on improperly translocated ribosomes. Back-translocation proceeds from a post-translocation (POST) complex to a pre-translocation (PRE) complex, thus giving elongation factor G a second chance to translocate the tRNAs correctly. Binds to ribosomes in a GTP-dependent manner.</text>
</comment>
<comment type="catalytic activity">
    <reaction evidence="1">
        <text>GTP + H2O = GDP + phosphate + H(+)</text>
        <dbReference type="Rhea" id="RHEA:19669"/>
        <dbReference type="ChEBI" id="CHEBI:15377"/>
        <dbReference type="ChEBI" id="CHEBI:15378"/>
        <dbReference type="ChEBI" id="CHEBI:37565"/>
        <dbReference type="ChEBI" id="CHEBI:43474"/>
        <dbReference type="ChEBI" id="CHEBI:58189"/>
        <dbReference type="EC" id="3.6.5.n1"/>
    </reaction>
</comment>
<comment type="subcellular location">
    <subcellularLocation>
        <location evidence="1">Cell membrane</location>
        <topology evidence="1">Peripheral membrane protein</topology>
        <orientation evidence="1">Cytoplasmic side</orientation>
    </subcellularLocation>
</comment>
<comment type="similarity">
    <text evidence="1">Belongs to the TRAFAC class translation factor GTPase superfamily. Classic translation factor GTPase family. LepA subfamily.</text>
</comment>
<feature type="chain" id="PRO_1000190833" description="Elongation factor 4">
    <location>
        <begin position="1"/>
        <end position="607"/>
    </location>
</feature>
<feature type="domain" description="tr-type G">
    <location>
        <begin position="11"/>
        <end position="193"/>
    </location>
</feature>
<feature type="binding site" evidence="1">
    <location>
        <begin position="23"/>
        <end position="28"/>
    </location>
    <ligand>
        <name>GTP</name>
        <dbReference type="ChEBI" id="CHEBI:37565"/>
    </ligand>
</feature>
<feature type="binding site" evidence="1">
    <location>
        <begin position="140"/>
        <end position="143"/>
    </location>
    <ligand>
        <name>GTP</name>
        <dbReference type="ChEBI" id="CHEBI:37565"/>
    </ligand>
</feature>
<name>LEPA_STRZP</name>
<accession>C1CKU6</accession>
<protein>
    <recommendedName>
        <fullName evidence="1">Elongation factor 4</fullName>
        <shortName evidence="1">EF-4</shortName>
        <ecNumber evidence="1">3.6.5.n1</ecNumber>
    </recommendedName>
    <alternativeName>
        <fullName evidence="1">Ribosomal back-translocase LepA</fullName>
    </alternativeName>
</protein>
<proteinExistence type="inferred from homology"/>
<dbReference type="EC" id="3.6.5.n1" evidence="1"/>
<dbReference type="EMBL" id="CP000920">
    <property type="protein sequence ID" value="ACO20233.1"/>
    <property type="molecule type" value="Genomic_DNA"/>
</dbReference>
<dbReference type="RefSeq" id="WP_001047212.1">
    <property type="nucleotide sequence ID" value="NC_012467.1"/>
</dbReference>
<dbReference type="SMR" id="C1CKU6"/>
<dbReference type="KEGG" id="spp:SPP_1241"/>
<dbReference type="HOGENOM" id="CLU_009995_3_3_9"/>
<dbReference type="GO" id="GO:0005886">
    <property type="term" value="C:plasma membrane"/>
    <property type="evidence" value="ECO:0007669"/>
    <property type="project" value="UniProtKB-SubCell"/>
</dbReference>
<dbReference type="GO" id="GO:0005525">
    <property type="term" value="F:GTP binding"/>
    <property type="evidence" value="ECO:0007669"/>
    <property type="project" value="UniProtKB-UniRule"/>
</dbReference>
<dbReference type="GO" id="GO:0003924">
    <property type="term" value="F:GTPase activity"/>
    <property type="evidence" value="ECO:0007669"/>
    <property type="project" value="UniProtKB-UniRule"/>
</dbReference>
<dbReference type="GO" id="GO:0043022">
    <property type="term" value="F:ribosome binding"/>
    <property type="evidence" value="ECO:0007669"/>
    <property type="project" value="UniProtKB-UniRule"/>
</dbReference>
<dbReference type="GO" id="GO:0003746">
    <property type="term" value="F:translation elongation factor activity"/>
    <property type="evidence" value="ECO:0007669"/>
    <property type="project" value="UniProtKB-UniRule"/>
</dbReference>
<dbReference type="GO" id="GO:0045727">
    <property type="term" value="P:positive regulation of translation"/>
    <property type="evidence" value="ECO:0007669"/>
    <property type="project" value="UniProtKB-UniRule"/>
</dbReference>
<dbReference type="CDD" id="cd03699">
    <property type="entry name" value="EF4_II"/>
    <property type="match status" value="1"/>
</dbReference>
<dbReference type="CDD" id="cd16260">
    <property type="entry name" value="EF4_III"/>
    <property type="match status" value="1"/>
</dbReference>
<dbReference type="CDD" id="cd01890">
    <property type="entry name" value="LepA"/>
    <property type="match status" value="1"/>
</dbReference>
<dbReference type="CDD" id="cd03709">
    <property type="entry name" value="lepA_C"/>
    <property type="match status" value="1"/>
</dbReference>
<dbReference type="FunFam" id="3.40.50.300:FF:000078">
    <property type="entry name" value="Elongation factor 4"/>
    <property type="match status" value="1"/>
</dbReference>
<dbReference type="FunFam" id="2.40.30.10:FF:000015">
    <property type="entry name" value="Translation factor GUF1, mitochondrial"/>
    <property type="match status" value="1"/>
</dbReference>
<dbReference type="FunFam" id="3.30.70.240:FF:000007">
    <property type="entry name" value="Translation factor GUF1, mitochondrial"/>
    <property type="match status" value="1"/>
</dbReference>
<dbReference type="FunFam" id="3.30.70.2570:FF:000001">
    <property type="entry name" value="Translation factor GUF1, mitochondrial"/>
    <property type="match status" value="1"/>
</dbReference>
<dbReference type="FunFam" id="3.30.70.870:FF:000004">
    <property type="entry name" value="Translation factor GUF1, mitochondrial"/>
    <property type="match status" value="1"/>
</dbReference>
<dbReference type="Gene3D" id="3.30.70.240">
    <property type="match status" value="1"/>
</dbReference>
<dbReference type="Gene3D" id="3.30.70.2570">
    <property type="entry name" value="Elongation factor 4, C-terminal domain"/>
    <property type="match status" value="1"/>
</dbReference>
<dbReference type="Gene3D" id="3.30.70.870">
    <property type="entry name" value="Elongation Factor G (Translational Gtpase), domain 3"/>
    <property type="match status" value="1"/>
</dbReference>
<dbReference type="Gene3D" id="3.40.50.300">
    <property type="entry name" value="P-loop containing nucleotide triphosphate hydrolases"/>
    <property type="match status" value="1"/>
</dbReference>
<dbReference type="Gene3D" id="2.40.30.10">
    <property type="entry name" value="Translation factors"/>
    <property type="match status" value="1"/>
</dbReference>
<dbReference type="HAMAP" id="MF_00071">
    <property type="entry name" value="LepA"/>
    <property type="match status" value="1"/>
</dbReference>
<dbReference type="InterPro" id="IPR006297">
    <property type="entry name" value="EF-4"/>
</dbReference>
<dbReference type="InterPro" id="IPR035647">
    <property type="entry name" value="EFG_III/V"/>
</dbReference>
<dbReference type="InterPro" id="IPR000640">
    <property type="entry name" value="EFG_V-like"/>
</dbReference>
<dbReference type="InterPro" id="IPR004161">
    <property type="entry name" value="EFTu-like_2"/>
</dbReference>
<dbReference type="InterPro" id="IPR031157">
    <property type="entry name" value="G_TR_CS"/>
</dbReference>
<dbReference type="InterPro" id="IPR038363">
    <property type="entry name" value="LepA_C_sf"/>
</dbReference>
<dbReference type="InterPro" id="IPR013842">
    <property type="entry name" value="LepA_CTD"/>
</dbReference>
<dbReference type="InterPro" id="IPR035654">
    <property type="entry name" value="LepA_IV"/>
</dbReference>
<dbReference type="InterPro" id="IPR027417">
    <property type="entry name" value="P-loop_NTPase"/>
</dbReference>
<dbReference type="InterPro" id="IPR005225">
    <property type="entry name" value="Small_GTP-bd"/>
</dbReference>
<dbReference type="InterPro" id="IPR000795">
    <property type="entry name" value="T_Tr_GTP-bd_dom"/>
</dbReference>
<dbReference type="NCBIfam" id="TIGR01393">
    <property type="entry name" value="lepA"/>
    <property type="match status" value="1"/>
</dbReference>
<dbReference type="NCBIfam" id="TIGR00231">
    <property type="entry name" value="small_GTP"/>
    <property type="match status" value="1"/>
</dbReference>
<dbReference type="PANTHER" id="PTHR43512:SF4">
    <property type="entry name" value="TRANSLATION FACTOR GUF1 HOMOLOG, CHLOROPLASTIC"/>
    <property type="match status" value="1"/>
</dbReference>
<dbReference type="PANTHER" id="PTHR43512">
    <property type="entry name" value="TRANSLATION FACTOR GUF1-RELATED"/>
    <property type="match status" value="1"/>
</dbReference>
<dbReference type="Pfam" id="PF00679">
    <property type="entry name" value="EFG_C"/>
    <property type="match status" value="1"/>
</dbReference>
<dbReference type="Pfam" id="PF00009">
    <property type="entry name" value="GTP_EFTU"/>
    <property type="match status" value="1"/>
</dbReference>
<dbReference type="Pfam" id="PF03144">
    <property type="entry name" value="GTP_EFTU_D2"/>
    <property type="match status" value="1"/>
</dbReference>
<dbReference type="Pfam" id="PF06421">
    <property type="entry name" value="LepA_C"/>
    <property type="match status" value="1"/>
</dbReference>
<dbReference type="PRINTS" id="PR00315">
    <property type="entry name" value="ELONGATNFCT"/>
</dbReference>
<dbReference type="SMART" id="SM00838">
    <property type="entry name" value="EFG_C"/>
    <property type="match status" value="1"/>
</dbReference>
<dbReference type="SUPFAM" id="SSF54980">
    <property type="entry name" value="EF-G C-terminal domain-like"/>
    <property type="match status" value="2"/>
</dbReference>
<dbReference type="SUPFAM" id="SSF52540">
    <property type="entry name" value="P-loop containing nucleoside triphosphate hydrolases"/>
    <property type="match status" value="1"/>
</dbReference>
<dbReference type="PROSITE" id="PS00301">
    <property type="entry name" value="G_TR_1"/>
    <property type="match status" value="1"/>
</dbReference>
<dbReference type="PROSITE" id="PS51722">
    <property type="entry name" value="G_TR_2"/>
    <property type="match status" value="1"/>
</dbReference>
<evidence type="ECO:0000255" key="1">
    <source>
        <dbReference type="HAMAP-Rule" id="MF_00071"/>
    </source>
</evidence>
<gene>
    <name evidence="1" type="primary">lepA</name>
    <name type="ordered locus">SPP_1241</name>
</gene>
<keyword id="KW-1003">Cell membrane</keyword>
<keyword id="KW-0342">GTP-binding</keyword>
<keyword id="KW-0378">Hydrolase</keyword>
<keyword id="KW-0472">Membrane</keyword>
<keyword id="KW-0547">Nucleotide-binding</keyword>
<keyword id="KW-0648">Protein biosynthesis</keyword>
<organism>
    <name type="scientific">Streptococcus pneumoniae (strain P1031)</name>
    <dbReference type="NCBI Taxonomy" id="488223"/>
    <lineage>
        <taxon>Bacteria</taxon>
        <taxon>Bacillati</taxon>
        <taxon>Bacillota</taxon>
        <taxon>Bacilli</taxon>
        <taxon>Lactobacillales</taxon>
        <taxon>Streptococcaceae</taxon>
        <taxon>Streptococcus</taxon>
    </lineage>
</organism>
<sequence>MNLEELKKRQEKIRNFSIIAHIDHGKSTLADRILEKTETVSSREMQAQLLDSMELERERGITIKLNAIELNYTAKDGETYIFHLIDTPGHVDFTYEVSRSLAACEGAILVVDAAQGIEAQTLANVYLALDNDLEIMPIINKIDLPAADPERVRTEIEDVIGLDASEAVLASAKAGIGIEEILEQIVEKVPAPTGDVTAPLKALIFDSVYDAYRGVILQVRVMDGVVKPGDKIQLMSNSKTFDVAEVGIFTPKAVGRDFLATGDVGYIAASIKTVQDTRVGDTVTLATNPAAEPLHGYKQMNPMVFAGLYPIESNKYNDLREALEKLQLNDASLQFEPETSQALGFGFRCGFLGLLHMDVIQERLEREFNIDLIMTAPSVIYKVNLTDGESMDVSNPSEFPDPTKIATIEEPYVKAQIMVPQEFVGAVMELAQRKRGDFVTMDYIDDNRVNVIYQIPLAEIVFDFFDKLKSSTRGYASFDYELSEYRPSKLVKMDILLNGDKVDALSFIVHKDFAYERGKLIVDKLKKIIPRQQFEVPIQAAIGHKIVARTDIKALRKNVLAKCYGGDVSRKRKLLEKQKAGKKRMKSIGSVEVPQEAFLSVLSMDEE</sequence>
<reference key="1">
    <citation type="journal article" date="2010" name="Genome Biol.">
        <title>Structure and dynamics of the pan-genome of Streptococcus pneumoniae and closely related species.</title>
        <authorList>
            <person name="Donati C."/>
            <person name="Hiller N.L."/>
            <person name="Tettelin H."/>
            <person name="Muzzi A."/>
            <person name="Croucher N.J."/>
            <person name="Angiuoli S.V."/>
            <person name="Oggioni M."/>
            <person name="Dunning Hotopp J.C."/>
            <person name="Hu F.Z."/>
            <person name="Riley D.R."/>
            <person name="Covacci A."/>
            <person name="Mitchell T.J."/>
            <person name="Bentley S.D."/>
            <person name="Kilian M."/>
            <person name="Ehrlich G.D."/>
            <person name="Rappuoli R."/>
            <person name="Moxon E.R."/>
            <person name="Masignani V."/>
        </authorList>
    </citation>
    <scope>NUCLEOTIDE SEQUENCE [LARGE SCALE GENOMIC DNA]</scope>
    <source>
        <strain>P1031</strain>
    </source>
</reference>